<accession>B2SYL0</accession>
<evidence type="ECO:0000255" key="1">
    <source>
        <dbReference type="HAMAP-Rule" id="MF_01366"/>
    </source>
</evidence>
<evidence type="ECO:0000305" key="2"/>
<organism>
    <name type="scientific">Paraburkholderia phytofirmans (strain DSM 17436 / LMG 22146 / PsJN)</name>
    <name type="common">Burkholderia phytofirmans</name>
    <dbReference type="NCBI Taxonomy" id="398527"/>
    <lineage>
        <taxon>Bacteria</taxon>
        <taxon>Pseudomonadati</taxon>
        <taxon>Pseudomonadota</taxon>
        <taxon>Betaproteobacteria</taxon>
        <taxon>Burkholderiales</taxon>
        <taxon>Burkholderiaceae</taxon>
        <taxon>Paraburkholderia</taxon>
    </lineage>
</organism>
<comment type="function">
    <text evidence="1">This protein is one of the early assembly proteins of the 50S ribosomal subunit, although it is not seen to bind rRNA by itself. It is important during the early stages of 50S assembly.</text>
</comment>
<comment type="subunit">
    <text evidence="1">Part of the 50S ribosomal subunit.</text>
</comment>
<comment type="similarity">
    <text evidence="1">Belongs to the universal ribosomal protein uL13 family.</text>
</comment>
<feature type="chain" id="PRO_1000144101" description="Large ribosomal subunit protein uL13">
    <location>
        <begin position="1"/>
        <end position="142"/>
    </location>
</feature>
<proteinExistence type="inferred from homology"/>
<gene>
    <name evidence="1" type="primary">rplM</name>
    <name type="ordered locus">Bphyt_3354</name>
</gene>
<protein>
    <recommendedName>
        <fullName evidence="1">Large ribosomal subunit protein uL13</fullName>
    </recommendedName>
    <alternativeName>
        <fullName evidence="2">50S ribosomal protein L13</fullName>
    </alternativeName>
</protein>
<name>RL13_PARPJ</name>
<reference key="1">
    <citation type="journal article" date="2011" name="J. Bacteriol.">
        <title>Complete genome sequence of the plant growth-promoting endophyte Burkholderia phytofirmans strain PsJN.</title>
        <authorList>
            <person name="Weilharter A."/>
            <person name="Mitter B."/>
            <person name="Shin M.V."/>
            <person name="Chain P.S."/>
            <person name="Nowak J."/>
            <person name="Sessitsch A."/>
        </authorList>
    </citation>
    <scope>NUCLEOTIDE SEQUENCE [LARGE SCALE GENOMIC DNA]</scope>
    <source>
        <strain>DSM 17436 / LMG 22146 / PsJN</strain>
    </source>
</reference>
<dbReference type="EMBL" id="CP001052">
    <property type="protein sequence ID" value="ACD17745.1"/>
    <property type="molecule type" value="Genomic_DNA"/>
</dbReference>
<dbReference type="RefSeq" id="WP_007180422.1">
    <property type="nucleotide sequence ID" value="NC_010681.1"/>
</dbReference>
<dbReference type="SMR" id="B2SYL0"/>
<dbReference type="STRING" id="398527.Bphyt_3354"/>
<dbReference type="GeneID" id="66516029"/>
<dbReference type="KEGG" id="bpy:Bphyt_3354"/>
<dbReference type="eggNOG" id="COG0102">
    <property type="taxonomic scope" value="Bacteria"/>
</dbReference>
<dbReference type="HOGENOM" id="CLU_082184_2_2_4"/>
<dbReference type="OrthoDB" id="9801330at2"/>
<dbReference type="Proteomes" id="UP000001739">
    <property type="component" value="Chromosome 1"/>
</dbReference>
<dbReference type="GO" id="GO:0022625">
    <property type="term" value="C:cytosolic large ribosomal subunit"/>
    <property type="evidence" value="ECO:0007669"/>
    <property type="project" value="TreeGrafter"/>
</dbReference>
<dbReference type="GO" id="GO:0003729">
    <property type="term" value="F:mRNA binding"/>
    <property type="evidence" value="ECO:0007669"/>
    <property type="project" value="TreeGrafter"/>
</dbReference>
<dbReference type="GO" id="GO:0003735">
    <property type="term" value="F:structural constituent of ribosome"/>
    <property type="evidence" value="ECO:0007669"/>
    <property type="project" value="InterPro"/>
</dbReference>
<dbReference type="GO" id="GO:0017148">
    <property type="term" value="P:negative regulation of translation"/>
    <property type="evidence" value="ECO:0007669"/>
    <property type="project" value="TreeGrafter"/>
</dbReference>
<dbReference type="GO" id="GO:0006412">
    <property type="term" value="P:translation"/>
    <property type="evidence" value="ECO:0007669"/>
    <property type="project" value="UniProtKB-UniRule"/>
</dbReference>
<dbReference type="CDD" id="cd00392">
    <property type="entry name" value="Ribosomal_L13"/>
    <property type="match status" value="1"/>
</dbReference>
<dbReference type="FunFam" id="3.90.1180.10:FF:000001">
    <property type="entry name" value="50S ribosomal protein L13"/>
    <property type="match status" value="1"/>
</dbReference>
<dbReference type="Gene3D" id="3.90.1180.10">
    <property type="entry name" value="Ribosomal protein L13"/>
    <property type="match status" value="1"/>
</dbReference>
<dbReference type="HAMAP" id="MF_01366">
    <property type="entry name" value="Ribosomal_uL13"/>
    <property type="match status" value="1"/>
</dbReference>
<dbReference type="InterPro" id="IPR005822">
    <property type="entry name" value="Ribosomal_uL13"/>
</dbReference>
<dbReference type="InterPro" id="IPR005823">
    <property type="entry name" value="Ribosomal_uL13_bac-type"/>
</dbReference>
<dbReference type="InterPro" id="IPR036899">
    <property type="entry name" value="Ribosomal_uL13_sf"/>
</dbReference>
<dbReference type="NCBIfam" id="TIGR01066">
    <property type="entry name" value="rplM_bact"/>
    <property type="match status" value="1"/>
</dbReference>
<dbReference type="PANTHER" id="PTHR11545:SF2">
    <property type="entry name" value="LARGE RIBOSOMAL SUBUNIT PROTEIN UL13M"/>
    <property type="match status" value="1"/>
</dbReference>
<dbReference type="PANTHER" id="PTHR11545">
    <property type="entry name" value="RIBOSOMAL PROTEIN L13"/>
    <property type="match status" value="1"/>
</dbReference>
<dbReference type="Pfam" id="PF00572">
    <property type="entry name" value="Ribosomal_L13"/>
    <property type="match status" value="1"/>
</dbReference>
<dbReference type="PIRSF" id="PIRSF002181">
    <property type="entry name" value="Ribosomal_L13"/>
    <property type="match status" value="1"/>
</dbReference>
<dbReference type="SUPFAM" id="SSF52161">
    <property type="entry name" value="Ribosomal protein L13"/>
    <property type="match status" value="1"/>
</dbReference>
<keyword id="KW-0687">Ribonucleoprotein</keyword>
<keyword id="KW-0689">Ribosomal protein</keyword>
<sequence length="142" mass="15907">MKTFSAKAHEVTREWYVIDATDKVLGRVASEVAHRLRGKHKPEFTPHVDTGDFIIVINAGKLRVTGNKATDKKYYRHSGYPGGIYETTFGKMQERFPGRALEKAVKGMLPKGPLGYAMIKKLKVYAEATHPHSAQQPKALEI</sequence>